<organism>
    <name type="scientific">Shigella boydii serotype 4 (strain Sb227)</name>
    <dbReference type="NCBI Taxonomy" id="300268"/>
    <lineage>
        <taxon>Bacteria</taxon>
        <taxon>Pseudomonadati</taxon>
        <taxon>Pseudomonadota</taxon>
        <taxon>Gammaproteobacteria</taxon>
        <taxon>Enterobacterales</taxon>
        <taxon>Enterobacteriaceae</taxon>
        <taxon>Shigella</taxon>
    </lineage>
</organism>
<name>SMRB_SHIBS</name>
<gene>
    <name evidence="1" type="primary">smrB</name>
    <name type="ordered locus">SBO_2367</name>
</gene>
<keyword id="KW-0255">Endonuclease</keyword>
<keyword id="KW-0378">Hydrolase</keyword>
<keyword id="KW-0540">Nuclease</keyword>
<keyword id="KW-0694">RNA-binding</keyword>
<keyword id="KW-0699">rRNA-binding</keyword>
<sequence>MKKKTTLSEEDQALFRQLMAGTRKIKQDTIVHRPQRKKISEVPVKRLIQEQADASHYFSDEFQPLLNTEGPVKYVRPDVSHFEAKKLRRGDYSPELFLDLHGLTQLQAKQELGALIAACRREHVFCACVMHGHGKHILKQQTPLWLAQHPHVMAFHQAPKEYGGDAALLVLIEVEEWLPPELP</sequence>
<comment type="function">
    <text evidence="1">Acts as a ribosome collision sensor. Detects stalled/collided disomes (pairs of ribosomes where the leading ribosome is stalled and a second ribosome has collided with it) and endonucleolytically cleaves mRNA at the 5' boundary of the stalled ribosome. Stalled/collided disomes form a new interface (primarily via the 30S subunits) that binds SmrB. Cleaved mRNA becomes available for tmRNA ligation, leading to ribosomal subunit dissociation and rescue of stalled ribosomes.</text>
</comment>
<comment type="subunit">
    <text evidence="1">Associates with collided ribosomes, but not with correctly translating polysomes.</text>
</comment>
<comment type="similarity">
    <text evidence="1">Belongs to the SmrB family.</text>
</comment>
<dbReference type="EC" id="3.1.-.-" evidence="1"/>
<dbReference type="EMBL" id="CP000036">
    <property type="protein sequence ID" value="ABB66930.1"/>
    <property type="molecule type" value="Genomic_DNA"/>
</dbReference>
<dbReference type="RefSeq" id="WP_000730806.1">
    <property type="nucleotide sequence ID" value="NC_007613.1"/>
</dbReference>
<dbReference type="SMR" id="Q31YC7"/>
<dbReference type="GeneID" id="93774844"/>
<dbReference type="KEGG" id="sbo:SBO_2367"/>
<dbReference type="HOGENOM" id="CLU_055978_4_0_6"/>
<dbReference type="Proteomes" id="UP000007067">
    <property type="component" value="Chromosome"/>
</dbReference>
<dbReference type="GO" id="GO:0004521">
    <property type="term" value="F:RNA endonuclease activity"/>
    <property type="evidence" value="ECO:0007669"/>
    <property type="project" value="UniProtKB-UniRule"/>
</dbReference>
<dbReference type="GO" id="GO:0019843">
    <property type="term" value="F:rRNA binding"/>
    <property type="evidence" value="ECO:0007669"/>
    <property type="project" value="UniProtKB-UniRule"/>
</dbReference>
<dbReference type="GO" id="GO:0072344">
    <property type="term" value="P:rescue of stalled ribosome"/>
    <property type="evidence" value="ECO:0007669"/>
    <property type="project" value="UniProtKB-UniRule"/>
</dbReference>
<dbReference type="Gene3D" id="3.30.1370.110">
    <property type="match status" value="1"/>
</dbReference>
<dbReference type="HAMAP" id="MF_01042">
    <property type="entry name" value="SmrB"/>
    <property type="match status" value="1"/>
</dbReference>
<dbReference type="InterPro" id="IPR002625">
    <property type="entry name" value="Smr_dom"/>
</dbReference>
<dbReference type="InterPro" id="IPR036063">
    <property type="entry name" value="Smr_dom_sf"/>
</dbReference>
<dbReference type="InterPro" id="IPR022990">
    <property type="entry name" value="SmrB-like"/>
</dbReference>
<dbReference type="NCBIfam" id="NF003432">
    <property type="entry name" value="PRK04946.1"/>
    <property type="match status" value="1"/>
</dbReference>
<dbReference type="PANTHER" id="PTHR35562">
    <property type="entry name" value="DNA ENDONUCLEASE SMRA-RELATED"/>
    <property type="match status" value="1"/>
</dbReference>
<dbReference type="PANTHER" id="PTHR35562:SF1">
    <property type="entry name" value="UPF0115 PROTEIN YFCN"/>
    <property type="match status" value="1"/>
</dbReference>
<dbReference type="Pfam" id="PF01713">
    <property type="entry name" value="Smr"/>
    <property type="match status" value="1"/>
</dbReference>
<dbReference type="SMART" id="SM00463">
    <property type="entry name" value="SMR"/>
    <property type="match status" value="1"/>
</dbReference>
<dbReference type="SUPFAM" id="SSF160443">
    <property type="entry name" value="SMR domain-like"/>
    <property type="match status" value="1"/>
</dbReference>
<dbReference type="PROSITE" id="PS50828">
    <property type="entry name" value="SMR"/>
    <property type="match status" value="1"/>
</dbReference>
<protein>
    <recommendedName>
        <fullName evidence="1">Ribosome rescue factor SmrB</fullName>
        <ecNumber evidence="1">3.1.-.-</ecNumber>
    </recommendedName>
</protein>
<proteinExistence type="inferred from homology"/>
<accession>Q31YC7</accession>
<feature type="chain" id="PRO_1000084365" description="Ribosome rescue factor SmrB">
    <location>
        <begin position="1"/>
        <end position="183"/>
    </location>
</feature>
<feature type="domain" description="Smr" evidence="1">
    <location>
        <begin position="98"/>
        <end position="173"/>
    </location>
</feature>
<reference key="1">
    <citation type="journal article" date="2005" name="Nucleic Acids Res.">
        <title>Genome dynamics and diversity of Shigella species, the etiologic agents of bacillary dysentery.</title>
        <authorList>
            <person name="Yang F."/>
            <person name="Yang J."/>
            <person name="Zhang X."/>
            <person name="Chen L."/>
            <person name="Jiang Y."/>
            <person name="Yan Y."/>
            <person name="Tang X."/>
            <person name="Wang J."/>
            <person name="Xiong Z."/>
            <person name="Dong J."/>
            <person name="Xue Y."/>
            <person name="Zhu Y."/>
            <person name="Xu X."/>
            <person name="Sun L."/>
            <person name="Chen S."/>
            <person name="Nie H."/>
            <person name="Peng J."/>
            <person name="Xu J."/>
            <person name="Wang Y."/>
            <person name="Yuan Z."/>
            <person name="Wen Y."/>
            <person name="Yao Z."/>
            <person name="Shen Y."/>
            <person name="Qiang B."/>
            <person name="Hou Y."/>
            <person name="Yu J."/>
            <person name="Jin Q."/>
        </authorList>
    </citation>
    <scope>NUCLEOTIDE SEQUENCE [LARGE SCALE GENOMIC DNA]</scope>
    <source>
        <strain>Sb227</strain>
    </source>
</reference>
<evidence type="ECO:0000255" key="1">
    <source>
        <dbReference type="HAMAP-Rule" id="MF_01042"/>
    </source>
</evidence>